<name>RL32_THEMA</name>
<comment type="similarity">
    <text evidence="2">Belongs to the bacterial ribosomal protein bL32 family.</text>
</comment>
<sequence>MAVPKQKRSRSRTHHKRAKIYRAISVPLEKCPNCGEYKMPHRVCLHCGYYKGKQVLEISE</sequence>
<dbReference type="EMBL" id="AE000512">
    <property type="protein sequence ID" value="AAD35243.1"/>
    <property type="molecule type" value="Genomic_DNA"/>
</dbReference>
<dbReference type="PIR" id="D72412">
    <property type="entry name" value="D72412"/>
</dbReference>
<dbReference type="RefSeq" id="NP_227965.1">
    <property type="nucleotide sequence ID" value="NC_000853.1"/>
</dbReference>
<dbReference type="RefSeq" id="WP_004082761.1">
    <property type="nucleotide sequence ID" value="NZ_CP011107.1"/>
</dbReference>
<dbReference type="SMR" id="Q9WXZ7"/>
<dbReference type="FunCoup" id="Q9WXZ7">
    <property type="interactions" value="148"/>
</dbReference>
<dbReference type="STRING" id="243274.TM_0150"/>
<dbReference type="PaxDb" id="243274-THEMA_04050"/>
<dbReference type="EnsemblBacteria" id="AAD35243">
    <property type="protein sequence ID" value="AAD35243"/>
    <property type="gene ID" value="TM_0150"/>
</dbReference>
<dbReference type="KEGG" id="tma:TM0150"/>
<dbReference type="KEGG" id="tmi:THEMA_04050"/>
<dbReference type="KEGG" id="tmm:Tmari_0148"/>
<dbReference type="KEGG" id="tmw:THMA_0146"/>
<dbReference type="eggNOG" id="COG0333">
    <property type="taxonomic scope" value="Bacteria"/>
</dbReference>
<dbReference type="InParanoid" id="Q9WXZ7"/>
<dbReference type="OrthoDB" id="9812874at2"/>
<dbReference type="Proteomes" id="UP000008183">
    <property type="component" value="Chromosome"/>
</dbReference>
<dbReference type="GO" id="GO:0022625">
    <property type="term" value="C:cytosolic large ribosomal subunit"/>
    <property type="evidence" value="ECO:0000318"/>
    <property type="project" value="GO_Central"/>
</dbReference>
<dbReference type="GO" id="GO:0003735">
    <property type="term" value="F:structural constituent of ribosome"/>
    <property type="evidence" value="ECO:0000318"/>
    <property type="project" value="GO_Central"/>
</dbReference>
<dbReference type="GO" id="GO:0006412">
    <property type="term" value="P:translation"/>
    <property type="evidence" value="ECO:0007669"/>
    <property type="project" value="UniProtKB-UniRule"/>
</dbReference>
<dbReference type="HAMAP" id="MF_00340">
    <property type="entry name" value="Ribosomal_bL32"/>
    <property type="match status" value="1"/>
</dbReference>
<dbReference type="InterPro" id="IPR002677">
    <property type="entry name" value="Ribosomal_bL32"/>
</dbReference>
<dbReference type="InterPro" id="IPR044957">
    <property type="entry name" value="Ribosomal_bL32_bact"/>
</dbReference>
<dbReference type="InterPro" id="IPR011332">
    <property type="entry name" value="Ribosomal_zn-bd"/>
</dbReference>
<dbReference type="NCBIfam" id="TIGR01031">
    <property type="entry name" value="rpmF_bact"/>
    <property type="match status" value="1"/>
</dbReference>
<dbReference type="PANTHER" id="PTHR35534">
    <property type="entry name" value="50S RIBOSOMAL PROTEIN L32"/>
    <property type="match status" value="1"/>
</dbReference>
<dbReference type="PANTHER" id="PTHR35534:SF1">
    <property type="entry name" value="LARGE RIBOSOMAL SUBUNIT PROTEIN BL32"/>
    <property type="match status" value="1"/>
</dbReference>
<dbReference type="Pfam" id="PF01783">
    <property type="entry name" value="Ribosomal_L32p"/>
    <property type="match status" value="1"/>
</dbReference>
<dbReference type="SUPFAM" id="SSF57829">
    <property type="entry name" value="Zn-binding ribosomal proteins"/>
    <property type="match status" value="1"/>
</dbReference>
<accession>Q9WXZ7</accession>
<organism>
    <name type="scientific">Thermotoga maritima (strain ATCC 43589 / DSM 3109 / JCM 10099 / NBRC 100826 / MSB8)</name>
    <dbReference type="NCBI Taxonomy" id="243274"/>
    <lineage>
        <taxon>Bacteria</taxon>
        <taxon>Thermotogati</taxon>
        <taxon>Thermotogota</taxon>
        <taxon>Thermotogae</taxon>
        <taxon>Thermotogales</taxon>
        <taxon>Thermotogaceae</taxon>
        <taxon>Thermotoga</taxon>
    </lineage>
</organism>
<reference key="1">
    <citation type="journal article" date="1999" name="Nature">
        <title>Evidence for lateral gene transfer between Archaea and Bacteria from genome sequence of Thermotoga maritima.</title>
        <authorList>
            <person name="Nelson K.E."/>
            <person name="Clayton R.A."/>
            <person name="Gill S.R."/>
            <person name="Gwinn M.L."/>
            <person name="Dodson R.J."/>
            <person name="Haft D.H."/>
            <person name="Hickey E.K."/>
            <person name="Peterson J.D."/>
            <person name="Nelson W.C."/>
            <person name="Ketchum K.A."/>
            <person name="McDonald L.A."/>
            <person name="Utterback T.R."/>
            <person name="Malek J.A."/>
            <person name="Linher K.D."/>
            <person name="Garrett M.M."/>
            <person name="Stewart A.M."/>
            <person name="Cotton M.D."/>
            <person name="Pratt M.S."/>
            <person name="Phillips C.A."/>
            <person name="Richardson D.L."/>
            <person name="Heidelberg J.F."/>
            <person name="Sutton G.G."/>
            <person name="Fleischmann R.D."/>
            <person name="Eisen J.A."/>
            <person name="White O."/>
            <person name="Salzberg S.L."/>
            <person name="Smith H.O."/>
            <person name="Venter J.C."/>
            <person name="Fraser C.M."/>
        </authorList>
    </citation>
    <scope>NUCLEOTIDE SEQUENCE [LARGE SCALE GENOMIC DNA]</scope>
    <source>
        <strain>ATCC 43589 / DSM 3109 / JCM 10099 / NBRC 100826 / MSB8</strain>
    </source>
</reference>
<evidence type="ECO:0000250" key="1"/>
<evidence type="ECO:0000305" key="2"/>
<protein>
    <recommendedName>
        <fullName evidence="2">Large ribosomal subunit protein bL32</fullName>
    </recommendedName>
    <alternativeName>
        <fullName>50S ribosomal protein L32</fullName>
    </alternativeName>
</protein>
<feature type="initiator methionine" description="Removed" evidence="1">
    <location>
        <position position="1"/>
    </location>
</feature>
<feature type="chain" id="PRO_0000172425" description="Large ribosomal subunit protein bL32">
    <location>
        <begin position="2"/>
        <end position="60"/>
    </location>
</feature>
<gene>
    <name type="primary">rpmF</name>
    <name type="ordered locus">TM_0150</name>
</gene>
<proteinExistence type="inferred from homology"/>
<keyword id="KW-1185">Reference proteome</keyword>
<keyword id="KW-0687">Ribonucleoprotein</keyword>
<keyword id="KW-0689">Ribosomal protein</keyword>